<protein>
    <recommendedName>
        <fullName evidence="1">Phosphatidylglycerol--prolipoprotein diacylglyceryl transferase</fullName>
        <ecNumber evidence="1">2.5.1.145</ecNumber>
    </recommendedName>
</protein>
<name>LGT_YERPY</name>
<comment type="function">
    <text evidence="1">Catalyzes the transfer of the diacylglyceryl group from phosphatidylglycerol to the sulfhydryl group of the N-terminal cysteine of a prolipoprotein, the first step in the formation of mature lipoproteins.</text>
</comment>
<comment type="catalytic activity">
    <reaction evidence="1">
        <text>L-cysteinyl-[prolipoprotein] + a 1,2-diacyl-sn-glycero-3-phospho-(1'-sn-glycerol) = an S-1,2-diacyl-sn-glyceryl-L-cysteinyl-[prolipoprotein] + sn-glycerol 1-phosphate + H(+)</text>
        <dbReference type="Rhea" id="RHEA:56712"/>
        <dbReference type="Rhea" id="RHEA-COMP:14679"/>
        <dbReference type="Rhea" id="RHEA-COMP:14680"/>
        <dbReference type="ChEBI" id="CHEBI:15378"/>
        <dbReference type="ChEBI" id="CHEBI:29950"/>
        <dbReference type="ChEBI" id="CHEBI:57685"/>
        <dbReference type="ChEBI" id="CHEBI:64716"/>
        <dbReference type="ChEBI" id="CHEBI:140658"/>
        <dbReference type="EC" id="2.5.1.145"/>
    </reaction>
</comment>
<comment type="pathway">
    <text evidence="1">Protein modification; lipoprotein biosynthesis (diacylglyceryl transfer).</text>
</comment>
<comment type="subcellular location">
    <subcellularLocation>
        <location evidence="1">Cell inner membrane</location>
        <topology evidence="1">Multi-pass membrane protein</topology>
    </subcellularLocation>
</comment>
<comment type="similarity">
    <text evidence="1">Belongs to the Lgt family.</text>
</comment>
<keyword id="KW-0997">Cell inner membrane</keyword>
<keyword id="KW-1003">Cell membrane</keyword>
<keyword id="KW-0472">Membrane</keyword>
<keyword id="KW-0808">Transferase</keyword>
<keyword id="KW-0812">Transmembrane</keyword>
<keyword id="KW-1133">Transmembrane helix</keyword>
<dbReference type="EC" id="2.5.1.145" evidence="1"/>
<dbReference type="EMBL" id="CP000950">
    <property type="protein sequence ID" value="ACA67336.1"/>
    <property type="molecule type" value="Genomic_DNA"/>
</dbReference>
<dbReference type="RefSeq" id="WP_002211383.1">
    <property type="nucleotide sequence ID" value="NZ_CP009792.1"/>
</dbReference>
<dbReference type="SMR" id="B1JQC9"/>
<dbReference type="GeneID" id="57973850"/>
<dbReference type="KEGG" id="ypy:YPK_1035"/>
<dbReference type="PATRIC" id="fig|502800.11.peg.1667"/>
<dbReference type="UniPathway" id="UPA00664"/>
<dbReference type="GO" id="GO:0005886">
    <property type="term" value="C:plasma membrane"/>
    <property type="evidence" value="ECO:0007669"/>
    <property type="project" value="UniProtKB-SubCell"/>
</dbReference>
<dbReference type="GO" id="GO:0008961">
    <property type="term" value="F:phosphatidylglycerol-prolipoprotein diacylglyceryl transferase activity"/>
    <property type="evidence" value="ECO:0007669"/>
    <property type="project" value="UniProtKB-UniRule"/>
</dbReference>
<dbReference type="GO" id="GO:0042158">
    <property type="term" value="P:lipoprotein biosynthetic process"/>
    <property type="evidence" value="ECO:0007669"/>
    <property type="project" value="UniProtKB-UniRule"/>
</dbReference>
<dbReference type="HAMAP" id="MF_01147">
    <property type="entry name" value="Lgt"/>
    <property type="match status" value="1"/>
</dbReference>
<dbReference type="InterPro" id="IPR001640">
    <property type="entry name" value="Lgt"/>
</dbReference>
<dbReference type="NCBIfam" id="TIGR00544">
    <property type="entry name" value="lgt"/>
    <property type="match status" value="1"/>
</dbReference>
<dbReference type="PANTHER" id="PTHR30589:SF0">
    <property type="entry name" value="PHOSPHATIDYLGLYCEROL--PROLIPOPROTEIN DIACYLGLYCERYL TRANSFERASE"/>
    <property type="match status" value="1"/>
</dbReference>
<dbReference type="PANTHER" id="PTHR30589">
    <property type="entry name" value="PROLIPOPROTEIN DIACYLGLYCERYL TRANSFERASE"/>
    <property type="match status" value="1"/>
</dbReference>
<dbReference type="Pfam" id="PF01790">
    <property type="entry name" value="LGT"/>
    <property type="match status" value="1"/>
</dbReference>
<dbReference type="PROSITE" id="PS01311">
    <property type="entry name" value="LGT"/>
    <property type="match status" value="1"/>
</dbReference>
<accession>B1JQC9</accession>
<proteinExistence type="inferred from homology"/>
<gene>
    <name evidence="1" type="primary">lgt</name>
    <name type="ordered locus">YPK_1035</name>
</gene>
<organism>
    <name type="scientific">Yersinia pseudotuberculosis serotype O:3 (strain YPIII)</name>
    <dbReference type="NCBI Taxonomy" id="502800"/>
    <lineage>
        <taxon>Bacteria</taxon>
        <taxon>Pseudomonadati</taxon>
        <taxon>Pseudomonadota</taxon>
        <taxon>Gammaproteobacteria</taxon>
        <taxon>Enterobacterales</taxon>
        <taxon>Yersiniaceae</taxon>
        <taxon>Yersinia</taxon>
    </lineage>
</organism>
<evidence type="ECO:0000255" key="1">
    <source>
        <dbReference type="HAMAP-Rule" id="MF_01147"/>
    </source>
</evidence>
<feature type="chain" id="PRO_1000137478" description="Phosphatidylglycerol--prolipoprotein diacylglyceryl transferase">
    <location>
        <begin position="1"/>
        <end position="290"/>
    </location>
</feature>
<feature type="transmembrane region" description="Helical" evidence="1">
    <location>
        <begin position="21"/>
        <end position="41"/>
    </location>
</feature>
<feature type="transmembrane region" description="Helical" evidence="1">
    <location>
        <begin position="60"/>
        <end position="80"/>
    </location>
</feature>
<feature type="transmembrane region" description="Helical" evidence="1">
    <location>
        <begin position="96"/>
        <end position="116"/>
    </location>
</feature>
<feature type="transmembrane region" description="Helical" evidence="1">
    <location>
        <begin position="124"/>
        <end position="144"/>
    </location>
</feature>
<feature type="transmembrane region" description="Helical" evidence="1">
    <location>
        <begin position="199"/>
        <end position="219"/>
    </location>
</feature>
<feature type="transmembrane region" description="Helical" evidence="1">
    <location>
        <begin position="226"/>
        <end position="246"/>
    </location>
</feature>
<feature type="transmembrane region" description="Helical" evidence="1">
    <location>
        <begin position="260"/>
        <end position="280"/>
    </location>
</feature>
<feature type="binding site" evidence="1">
    <location>
        <position position="143"/>
    </location>
    <ligand>
        <name>a 1,2-diacyl-sn-glycero-3-phospho-(1'-sn-glycerol)</name>
        <dbReference type="ChEBI" id="CHEBI:64716"/>
    </ligand>
</feature>
<sequence>MSNSYLAFPKFDPVIFSIGPVSLHWYGLMYLVGFVFAMWLAVRRANKPGSGWTKEEVENLLYAGFLGVFIGGRVGYVLFYNLPMFLDNPLYLFKVWDGGMSFHGGLIGVICVMLWFARRTKRNFFQVADFIAPLIPFGLGAGRLGNFINAELWGRVTTDTPWAMLFPTSRNTDIAIVAADPAKWQAIFNQYGVLPRHPSQLYEMILEGVVLFIILNVFIRKPRPMGSVSGLFLIGYGTFRIIVECFRQPDEQLGLFEGMISMGQILSVPMILAGIIMMIWAYRRPTQKLS</sequence>
<reference key="1">
    <citation type="submission" date="2008-02" db="EMBL/GenBank/DDBJ databases">
        <title>Complete sequence of Yersinia pseudotuberculosis YPIII.</title>
        <authorList>
            <consortium name="US DOE Joint Genome Institute"/>
            <person name="Copeland A."/>
            <person name="Lucas S."/>
            <person name="Lapidus A."/>
            <person name="Glavina del Rio T."/>
            <person name="Dalin E."/>
            <person name="Tice H."/>
            <person name="Bruce D."/>
            <person name="Goodwin L."/>
            <person name="Pitluck S."/>
            <person name="Munk A.C."/>
            <person name="Brettin T."/>
            <person name="Detter J.C."/>
            <person name="Han C."/>
            <person name="Tapia R."/>
            <person name="Schmutz J."/>
            <person name="Larimer F."/>
            <person name="Land M."/>
            <person name="Hauser L."/>
            <person name="Challacombe J.F."/>
            <person name="Green L."/>
            <person name="Lindler L.E."/>
            <person name="Nikolich M.P."/>
            <person name="Richardson P."/>
        </authorList>
    </citation>
    <scope>NUCLEOTIDE SEQUENCE [LARGE SCALE GENOMIC DNA]</scope>
    <source>
        <strain>YPIII</strain>
    </source>
</reference>